<dbReference type="EMBL" id="AC079604">
    <property type="protein sequence ID" value="AAG50699.1"/>
    <property type="molecule type" value="Genomic_DNA"/>
</dbReference>
<dbReference type="EMBL" id="AC079991">
    <property type="protein sequence ID" value="AAG50663.1"/>
    <property type="molecule type" value="Genomic_DNA"/>
</dbReference>
<dbReference type="EMBL" id="CP002684">
    <property type="protein sequence ID" value="AEE33482.1"/>
    <property type="molecule type" value="Genomic_DNA"/>
</dbReference>
<dbReference type="EMBL" id="BT000962">
    <property type="protein sequence ID" value="AAN41362.1"/>
    <property type="molecule type" value="mRNA"/>
</dbReference>
<dbReference type="PIR" id="D96613">
    <property type="entry name" value="D96613"/>
</dbReference>
<dbReference type="RefSeq" id="NP_176100.1">
    <property type="nucleotide sequence ID" value="NM_104584.3"/>
</dbReference>
<dbReference type="BioGRID" id="27391">
    <property type="interactions" value="18"/>
</dbReference>
<dbReference type="IntAct" id="Q9C508">
    <property type="interactions" value="18"/>
</dbReference>
<dbReference type="STRING" id="3702.Q9C508"/>
<dbReference type="TCDB" id="2.A.7.14.2">
    <property type="family name" value="the drug/metabolite transporter (dmt) superfamily"/>
</dbReference>
<dbReference type="iPTMnet" id="Q9C508"/>
<dbReference type="PaxDb" id="3702-AT1G57990.1"/>
<dbReference type="ProteomicsDB" id="226269"/>
<dbReference type="EnsemblPlants" id="AT1G57990.1">
    <property type="protein sequence ID" value="AT1G57990.1"/>
    <property type="gene ID" value="AT1G57990"/>
</dbReference>
<dbReference type="GeneID" id="842166"/>
<dbReference type="Gramene" id="AT1G57990.1">
    <property type="protein sequence ID" value="AT1G57990.1"/>
    <property type="gene ID" value="AT1G57990"/>
</dbReference>
<dbReference type="KEGG" id="ath:AT1G57990"/>
<dbReference type="Araport" id="AT1G57990"/>
<dbReference type="TAIR" id="AT1G57990">
    <property type="gene designation" value="PUP18"/>
</dbReference>
<dbReference type="eggNOG" id="ENOG502QRUH">
    <property type="taxonomic scope" value="Eukaryota"/>
</dbReference>
<dbReference type="HOGENOM" id="CLU_043459_2_1_1"/>
<dbReference type="InParanoid" id="Q9C508"/>
<dbReference type="OMA" id="EFYSIQA"/>
<dbReference type="OrthoDB" id="1076148at2759"/>
<dbReference type="PhylomeDB" id="Q9C508"/>
<dbReference type="PRO" id="PR:Q9C508"/>
<dbReference type="Proteomes" id="UP000006548">
    <property type="component" value="Chromosome 1"/>
</dbReference>
<dbReference type="ExpressionAtlas" id="Q9C508">
    <property type="expression patterns" value="baseline and differential"/>
</dbReference>
<dbReference type="GO" id="GO:0016020">
    <property type="term" value="C:membrane"/>
    <property type="evidence" value="ECO:0000304"/>
    <property type="project" value="TAIR"/>
</dbReference>
<dbReference type="GO" id="GO:0005886">
    <property type="term" value="C:plasma membrane"/>
    <property type="evidence" value="ECO:0007005"/>
    <property type="project" value="TAIR"/>
</dbReference>
<dbReference type="GO" id="GO:0005345">
    <property type="term" value="F:purine nucleobase transmembrane transporter activity"/>
    <property type="evidence" value="ECO:0000304"/>
    <property type="project" value="TAIR"/>
</dbReference>
<dbReference type="GO" id="GO:0015211">
    <property type="term" value="F:purine nucleoside transmembrane transporter activity"/>
    <property type="evidence" value="ECO:0007669"/>
    <property type="project" value="InterPro"/>
</dbReference>
<dbReference type="GO" id="GO:0006863">
    <property type="term" value="P:purine nucleobase transport"/>
    <property type="evidence" value="ECO:0000304"/>
    <property type="project" value="TAIR"/>
</dbReference>
<dbReference type="InterPro" id="IPR030182">
    <property type="entry name" value="PUP_plant"/>
</dbReference>
<dbReference type="PANTHER" id="PTHR31376">
    <property type="entry name" value="OS09G0467300 PROTEIN-RELATED"/>
    <property type="match status" value="1"/>
</dbReference>
<dbReference type="PANTHER" id="PTHR31376:SF34">
    <property type="entry name" value="PURINE PERMEASE 17-RELATED"/>
    <property type="match status" value="1"/>
</dbReference>
<dbReference type="Pfam" id="PF16913">
    <property type="entry name" value="PUNUT"/>
    <property type="match status" value="1"/>
</dbReference>
<dbReference type="PROSITE" id="PS00213">
    <property type="entry name" value="LIPOCALIN"/>
    <property type="match status" value="1"/>
</dbReference>
<organism>
    <name type="scientific">Arabidopsis thaliana</name>
    <name type="common">Mouse-ear cress</name>
    <dbReference type="NCBI Taxonomy" id="3702"/>
    <lineage>
        <taxon>Eukaryota</taxon>
        <taxon>Viridiplantae</taxon>
        <taxon>Streptophyta</taxon>
        <taxon>Embryophyta</taxon>
        <taxon>Tracheophyta</taxon>
        <taxon>Spermatophyta</taxon>
        <taxon>Magnoliopsida</taxon>
        <taxon>eudicotyledons</taxon>
        <taxon>Gunneridae</taxon>
        <taxon>Pentapetalae</taxon>
        <taxon>rosids</taxon>
        <taxon>malvids</taxon>
        <taxon>Brassicales</taxon>
        <taxon>Brassicaceae</taxon>
        <taxon>Camelineae</taxon>
        <taxon>Arabidopsis</taxon>
    </lineage>
</organism>
<name>PUP18_ARATH</name>
<accession>Q9C508</accession>
<keyword id="KW-0472">Membrane</keyword>
<keyword id="KW-0597">Phosphoprotein</keyword>
<keyword id="KW-1185">Reference proteome</keyword>
<keyword id="KW-0812">Transmembrane</keyword>
<keyword id="KW-1133">Transmembrane helix</keyword>
<keyword id="KW-0813">Transport</keyword>
<evidence type="ECO:0000255" key="1"/>
<evidence type="ECO:0000256" key="2">
    <source>
        <dbReference type="SAM" id="MobiDB-lite"/>
    </source>
</evidence>
<evidence type="ECO:0000305" key="3"/>
<evidence type="ECO:0007744" key="4">
    <source>
    </source>
</evidence>
<evidence type="ECO:0007744" key="5">
    <source>
    </source>
</evidence>
<evidence type="ECO:0007744" key="6">
    <source>
    </source>
</evidence>
<evidence type="ECO:0007744" key="7">
    <source>
    </source>
</evidence>
<evidence type="ECO:0007744" key="8">
    <source>
    </source>
</evidence>
<evidence type="ECO:0007744" key="9">
    <source>
    </source>
</evidence>
<comment type="subcellular location">
    <subcellularLocation>
        <location evidence="3">Membrane</location>
        <topology evidence="3">Multi-pass membrane protein</topology>
    </subcellularLocation>
</comment>
<comment type="similarity">
    <text evidence="3">Belongs to the purine permeases (TC 2.A.7.14) family.</text>
</comment>
<protein>
    <recommendedName>
        <fullName>Probable purine permease 18</fullName>
        <shortName>AtPUP18</shortName>
    </recommendedName>
</protein>
<gene>
    <name type="primary">PUP18</name>
    <name type="ordered locus">At1g57990</name>
    <name type="ORF">F13D13.3</name>
    <name type="ORF">T15M6.24</name>
</gene>
<sequence>MEMTEASKQTTAEGSANPEPDQILSPRRSLELKQKKWWISVSLCIFLVLLGDSLVMLLLNFFYVQDNREDSDQDLQYRGTWLQALVQNAAFPLLIPLFFIFPSPKQNQETTNTRFLSFRLILLYISLGVLVAAHSKLFALGKLYANFGVFTLISATQLIFTAIFAAIINRFKFTRWIILSIIGSILIYVFGSPEFGGEPDENEEFYSIQAWLTFAASVAFALSLCLFQLCFEKVLVKTKRYGNKKVFRMVIEMQICVSFVATVVCLVGLFASGENKELQGDSHRFKKGETYYVLSLIGLALSWQVWAVGLMGLVLYVSGVFGDVVHMCTSPLVALFVVLAFDFMDDEFSWPRIGTLIATVVALGSYFYTLHKRNKKKMVELYQTENNIDV</sequence>
<reference key="1">
    <citation type="journal article" date="2000" name="Nature">
        <title>Sequence and analysis of chromosome 1 of the plant Arabidopsis thaliana.</title>
        <authorList>
            <person name="Theologis A."/>
            <person name="Ecker J.R."/>
            <person name="Palm C.J."/>
            <person name="Federspiel N.A."/>
            <person name="Kaul S."/>
            <person name="White O."/>
            <person name="Alonso J."/>
            <person name="Altafi H."/>
            <person name="Araujo R."/>
            <person name="Bowman C.L."/>
            <person name="Brooks S.Y."/>
            <person name="Buehler E."/>
            <person name="Chan A."/>
            <person name="Chao Q."/>
            <person name="Chen H."/>
            <person name="Cheuk R.F."/>
            <person name="Chin C.W."/>
            <person name="Chung M.K."/>
            <person name="Conn L."/>
            <person name="Conway A.B."/>
            <person name="Conway A.R."/>
            <person name="Creasy T.H."/>
            <person name="Dewar K."/>
            <person name="Dunn P."/>
            <person name="Etgu P."/>
            <person name="Feldblyum T.V."/>
            <person name="Feng J.-D."/>
            <person name="Fong B."/>
            <person name="Fujii C.Y."/>
            <person name="Gill J.E."/>
            <person name="Goldsmith A.D."/>
            <person name="Haas B."/>
            <person name="Hansen N.F."/>
            <person name="Hughes B."/>
            <person name="Huizar L."/>
            <person name="Hunter J.L."/>
            <person name="Jenkins J."/>
            <person name="Johnson-Hopson C."/>
            <person name="Khan S."/>
            <person name="Khaykin E."/>
            <person name="Kim C.J."/>
            <person name="Koo H.L."/>
            <person name="Kremenetskaia I."/>
            <person name="Kurtz D.B."/>
            <person name="Kwan A."/>
            <person name="Lam B."/>
            <person name="Langin-Hooper S."/>
            <person name="Lee A."/>
            <person name="Lee J.M."/>
            <person name="Lenz C.A."/>
            <person name="Li J.H."/>
            <person name="Li Y.-P."/>
            <person name="Lin X."/>
            <person name="Liu S.X."/>
            <person name="Liu Z.A."/>
            <person name="Luros J.S."/>
            <person name="Maiti R."/>
            <person name="Marziali A."/>
            <person name="Militscher J."/>
            <person name="Miranda M."/>
            <person name="Nguyen M."/>
            <person name="Nierman W.C."/>
            <person name="Osborne B.I."/>
            <person name="Pai G."/>
            <person name="Peterson J."/>
            <person name="Pham P.K."/>
            <person name="Rizzo M."/>
            <person name="Rooney T."/>
            <person name="Rowley D."/>
            <person name="Sakano H."/>
            <person name="Salzberg S.L."/>
            <person name="Schwartz J.R."/>
            <person name="Shinn P."/>
            <person name="Southwick A.M."/>
            <person name="Sun H."/>
            <person name="Tallon L.J."/>
            <person name="Tambunga G."/>
            <person name="Toriumi M.J."/>
            <person name="Town C.D."/>
            <person name="Utterback T."/>
            <person name="Van Aken S."/>
            <person name="Vaysberg M."/>
            <person name="Vysotskaia V.S."/>
            <person name="Walker M."/>
            <person name="Wu D."/>
            <person name="Yu G."/>
            <person name="Fraser C.M."/>
            <person name="Venter J.C."/>
            <person name="Davis R.W."/>
        </authorList>
    </citation>
    <scope>NUCLEOTIDE SEQUENCE [LARGE SCALE GENOMIC DNA]</scope>
    <source>
        <strain>cv. Columbia</strain>
    </source>
</reference>
<reference key="2">
    <citation type="journal article" date="2017" name="Plant J.">
        <title>Araport11: a complete reannotation of the Arabidopsis thaliana reference genome.</title>
        <authorList>
            <person name="Cheng C.Y."/>
            <person name="Krishnakumar V."/>
            <person name="Chan A.P."/>
            <person name="Thibaud-Nissen F."/>
            <person name="Schobel S."/>
            <person name="Town C.D."/>
        </authorList>
    </citation>
    <scope>GENOME REANNOTATION</scope>
    <source>
        <strain>cv. Columbia</strain>
    </source>
</reference>
<reference key="3">
    <citation type="journal article" date="2003" name="Science">
        <title>Empirical analysis of transcriptional activity in the Arabidopsis genome.</title>
        <authorList>
            <person name="Yamada K."/>
            <person name="Lim J."/>
            <person name="Dale J.M."/>
            <person name="Chen H."/>
            <person name="Shinn P."/>
            <person name="Palm C.J."/>
            <person name="Southwick A.M."/>
            <person name="Wu H.C."/>
            <person name="Kim C.J."/>
            <person name="Nguyen M."/>
            <person name="Pham P.K."/>
            <person name="Cheuk R.F."/>
            <person name="Karlin-Newmann G."/>
            <person name="Liu S.X."/>
            <person name="Lam B."/>
            <person name="Sakano H."/>
            <person name="Wu T."/>
            <person name="Yu G."/>
            <person name="Miranda M."/>
            <person name="Quach H.L."/>
            <person name="Tripp M."/>
            <person name="Chang C.H."/>
            <person name="Lee J.M."/>
            <person name="Toriumi M.J."/>
            <person name="Chan M.M."/>
            <person name="Tang C.C."/>
            <person name="Onodera C.S."/>
            <person name="Deng J.M."/>
            <person name="Akiyama K."/>
            <person name="Ansari Y."/>
            <person name="Arakawa T."/>
            <person name="Banh J."/>
            <person name="Banno F."/>
            <person name="Bowser L."/>
            <person name="Brooks S.Y."/>
            <person name="Carninci P."/>
            <person name="Chao Q."/>
            <person name="Choy N."/>
            <person name="Enju A."/>
            <person name="Goldsmith A.D."/>
            <person name="Gurjal M."/>
            <person name="Hansen N.F."/>
            <person name="Hayashizaki Y."/>
            <person name="Johnson-Hopson C."/>
            <person name="Hsuan V.W."/>
            <person name="Iida K."/>
            <person name="Karnes M."/>
            <person name="Khan S."/>
            <person name="Koesema E."/>
            <person name="Ishida J."/>
            <person name="Jiang P.X."/>
            <person name="Jones T."/>
            <person name="Kawai J."/>
            <person name="Kamiya A."/>
            <person name="Meyers C."/>
            <person name="Nakajima M."/>
            <person name="Narusaka M."/>
            <person name="Seki M."/>
            <person name="Sakurai T."/>
            <person name="Satou M."/>
            <person name="Tamse R."/>
            <person name="Vaysberg M."/>
            <person name="Wallender E.K."/>
            <person name="Wong C."/>
            <person name="Yamamura Y."/>
            <person name="Yuan S."/>
            <person name="Shinozaki K."/>
            <person name="Davis R.W."/>
            <person name="Theologis A."/>
            <person name="Ecker J.R."/>
        </authorList>
    </citation>
    <scope>NUCLEOTIDE SEQUENCE [LARGE SCALE MRNA]</scope>
    <source>
        <strain>cv. Columbia</strain>
    </source>
</reference>
<reference key="4">
    <citation type="journal article" date="2000" name="Plant Cell">
        <title>A new family of high-affinity transporters for adenine, cytosine, and purine derivatives in Arabidopsis.</title>
        <authorList>
            <person name="Gillissen B."/>
            <person name="Buerkle L."/>
            <person name="Andre B."/>
            <person name="Kuehn C."/>
            <person name="Rentsch D."/>
            <person name="Brandl B."/>
            <person name="Frommer W.B."/>
        </authorList>
    </citation>
    <scope>GENE FAMILY</scope>
    <scope>NOMENCLATURE</scope>
</reference>
<reference key="5">
    <citation type="journal article" date="2003" name="Mol. Cell. Proteomics">
        <title>Large-scale analysis of in vivo phosphorylated membrane proteins by immobilized metal ion affinity chromatography and mass spectrometry.</title>
        <authorList>
            <person name="Nuehse T.S."/>
            <person name="Stensballe A."/>
            <person name="Jensen O.N."/>
            <person name="Peck S.C."/>
        </authorList>
    </citation>
    <scope>PHOSPHORYLATION [LARGE SCALE ANALYSIS] AT SER-25</scope>
    <scope>IDENTIFICATION BY MASS SPECTROMETRY [LARGE SCALE ANALYSIS]</scope>
    <source>
        <strain>cv. La-0</strain>
    </source>
</reference>
<reference key="6">
    <citation type="journal article" date="2004" name="Plant Cell">
        <title>Phosphoproteomics of the Arabidopsis plasma membrane and a new phosphorylation site database.</title>
        <authorList>
            <person name="Nuehse T.S."/>
            <person name="Stensballe A."/>
            <person name="Jensen O.N."/>
            <person name="Peck S.C."/>
        </authorList>
    </citation>
    <scope>PHOSPHORYLATION [LARGE SCALE ANALYSIS] AT SER-25</scope>
    <scope>IDENTIFICATION BY MASS SPECTROMETRY [LARGE SCALE ANALYSIS]</scope>
</reference>
<reference key="7">
    <citation type="journal article" date="2007" name="Biochem. Biophys. Res. Commun.">
        <title>Novel subsets of the Arabidopsis plasmalemma phosphoproteome identify phosphorylation sites in secondary active transporters.</title>
        <authorList>
            <person name="Hem S."/>
            <person name="Rofidal V."/>
            <person name="Sommerer N."/>
            <person name="Rossignol M."/>
        </authorList>
    </citation>
    <scope>PHOSPHORYLATION [LARGE SCALE ANALYSIS] AT SER-25</scope>
    <scope>IDENTIFICATION BY MASS SPECTROMETRY [LARGE SCALE ANALYSIS]</scope>
</reference>
<reference key="8">
    <citation type="journal article" date="2007" name="Mol. Cell. Proteomics">
        <title>Temporal analysis of sucrose-induced phosphorylation changes in plasma membrane proteins of Arabidopsis.</title>
        <authorList>
            <person name="Niittylae T."/>
            <person name="Fuglsang A.T."/>
            <person name="Palmgren M.G."/>
            <person name="Frommer W.B."/>
            <person name="Schulze W.X."/>
        </authorList>
    </citation>
    <scope>PHOSPHORYLATION [LARGE SCALE ANALYSIS] AT SER-25</scope>
    <scope>IDENTIFICATION BY MASS SPECTROMETRY [LARGE SCALE ANALYSIS]</scope>
    <source>
        <tissue>Seedling</tissue>
    </source>
</reference>
<reference key="9">
    <citation type="journal article" date="2009" name="J. Proteomics">
        <title>Phosphoproteomic analysis of nuclei-enriched fractions from Arabidopsis thaliana.</title>
        <authorList>
            <person name="Jones A.M.E."/>
            <person name="MacLean D."/>
            <person name="Studholme D.J."/>
            <person name="Serna-Sanz A."/>
            <person name="Andreasson E."/>
            <person name="Rathjen J.P."/>
            <person name="Peck S.C."/>
        </authorList>
    </citation>
    <scope>PHOSPHORYLATION [LARGE SCALE ANALYSIS] AT SER-25</scope>
    <scope>IDENTIFICATION BY MASS SPECTROMETRY [LARGE SCALE ANALYSIS]</scope>
    <source>
        <strain>cv. Columbia</strain>
    </source>
</reference>
<reference key="10">
    <citation type="journal article" date="2009" name="Plant Physiol.">
        <title>Large-scale Arabidopsis phosphoproteome profiling reveals novel chloroplast kinase substrates and phosphorylation networks.</title>
        <authorList>
            <person name="Reiland S."/>
            <person name="Messerli G."/>
            <person name="Baerenfaller K."/>
            <person name="Gerrits B."/>
            <person name="Endler A."/>
            <person name="Grossmann J."/>
            <person name="Gruissem W."/>
            <person name="Baginsky S."/>
        </authorList>
    </citation>
    <scope>PHOSPHORYLATION [LARGE SCALE ANALYSIS] AT SER-25</scope>
    <scope>IDENTIFICATION BY MASS SPECTROMETRY [LARGE SCALE ANALYSIS]</scope>
</reference>
<feature type="chain" id="PRO_0000317405" description="Probable purine permease 18">
    <location>
        <begin position="1"/>
        <end position="390"/>
    </location>
</feature>
<feature type="transmembrane region" description="Helical" evidence="1">
    <location>
        <begin position="39"/>
        <end position="59"/>
    </location>
</feature>
<feature type="transmembrane region" description="Helical" evidence="1">
    <location>
        <begin position="81"/>
        <end position="101"/>
    </location>
</feature>
<feature type="transmembrane region" description="Helical" evidence="1">
    <location>
        <begin position="120"/>
        <end position="140"/>
    </location>
</feature>
<feature type="transmembrane region" description="Helical" evidence="1">
    <location>
        <begin position="148"/>
        <end position="168"/>
    </location>
</feature>
<feature type="transmembrane region" description="Helical" evidence="1">
    <location>
        <begin position="176"/>
        <end position="196"/>
    </location>
</feature>
<feature type="transmembrane region" description="Helical" evidence="1">
    <location>
        <begin position="211"/>
        <end position="231"/>
    </location>
</feature>
<feature type="transmembrane region" description="Helical" evidence="1">
    <location>
        <begin position="250"/>
        <end position="270"/>
    </location>
</feature>
<feature type="transmembrane region" description="Helical" evidence="1">
    <location>
        <begin position="297"/>
        <end position="317"/>
    </location>
</feature>
<feature type="transmembrane region" description="Helical" evidence="1">
    <location>
        <begin position="324"/>
        <end position="344"/>
    </location>
</feature>
<feature type="transmembrane region" description="Helical" evidence="1">
    <location>
        <begin position="348"/>
        <end position="368"/>
    </location>
</feature>
<feature type="region of interest" description="Disordered" evidence="2">
    <location>
        <begin position="1"/>
        <end position="23"/>
    </location>
</feature>
<feature type="compositionally biased region" description="Polar residues" evidence="2">
    <location>
        <begin position="1"/>
        <end position="14"/>
    </location>
</feature>
<feature type="modified residue" description="Phosphoserine" evidence="4 5 6 7 8 9">
    <location>
        <position position="25"/>
    </location>
</feature>
<proteinExistence type="evidence at protein level"/>